<keyword id="KW-0106">Calcium</keyword>
<keyword id="KW-0204">Cytolysis</keyword>
<keyword id="KW-0354">Hemolysis</keyword>
<keyword id="KW-1032">Host cell membrane</keyword>
<keyword id="KW-1043">Host membrane</keyword>
<keyword id="KW-0449">Lipoprotein</keyword>
<keyword id="KW-0472">Membrane</keyword>
<keyword id="KW-0677">Repeat</keyword>
<keyword id="KW-0964">Secreted</keyword>
<keyword id="KW-0800">Toxin</keyword>
<keyword id="KW-0812">Transmembrane</keyword>
<keyword id="KW-1133">Transmembrane helix</keyword>
<keyword id="KW-0843">Virulence</keyword>
<name>LKA1B_MANHA</name>
<evidence type="ECO:0000255" key="1"/>
<evidence type="ECO:0000269" key="2">
    <source>
    </source>
</evidence>
<evidence type="ECO:0000269" key="3">
    <source>
    </source>
</evidence>
<evidence type="ECO:0000269" key="4">
    <source>
    </source>
</evidence>
<evidence type="ECO:0000269" key="5">
    <source>
    </source>
</evidence>
<evidence type="ECO:0000269" key="6">
    <source>
    </source>
</evidence>
<evidence type="ECO:0000269" key="7">
    <source>
    </source>
</evidence>
<evidence type="ECO:0000305" key="8"/>
<comment type="function">
    <text evidence="2 3 4 5 6 7">Pasteurella leukotoxins are exotoxins that attack host leukocytes and especially polymorphonuclear cells, by causing cell rupture. The leukotoxin binds to the host LFA-1 integrin and induces a signaling cascade leading to many biological effects, including tyrosine phosphorylation of the CD18 tail, elevation of the intracellular Ca(2+) and lysis of the host cell. This leukotoxin is a major contributor to the pathogenesis of lung injury in bovine pneumonic pasteurellosis. It also has week hemolytic activity.</text>
</comment>
<comment type="interaction">
    <interactant intactId="EBI-11580242">
        <id>Q7BHI8</id>
    </interactant>
    <interactant intactId="EBI-11616611">
        <id>P61625</id>
        <label>ITGAL</label>
    </interactant>
    <organismsDiffer>true</organismsDiffer>
    <experiments>2</experiments>
</comment>
<comment type="interaction">
    <interactant intactId="EBI-11580242">
        <id>Q7BHI8</id>
    </interactant>
    <interactant intactId="EBI-11509482">
        <id>P32592</id>
        <label>ITGB2</label>
    </interactant>
    <organismsDiffer>true</organismsDiffer>
    <experiments>3</experiments>
</comment>
<comment type="subcellular location">
    <subcellularLocation>
        <location>Secreted</location>
    </subcellularLocation>
    <subcellularLocation>
        <location evidence="8">Host cell membrane</location>
        <topology evidence="8">Multi-pass membrane protein</topology>
    </subcellularLocation>
</comment>
<comment type="domain">
    <text>The transmembrane domains are believed to be involved in pore formation in target cells.</text>
</comment>
<comment type="domain">
    <text>The Gly-rich region is probably involved in calcium binding, which is required for target cell-binding and cytolytic activity.</text>
</comment>
<comment type="domain">
    <text>The C-terminal domain contains an export signal that is recognized by the ABC transporter complex LktBD.</text>
</comment>
<comment type="PTM">
    <text evidence="3">Acylated by LktC. The toxin only becomes active when modified (PubMed:12732470).</text>
</comment>
<comment type="miscellaneous">
    <text>The lktCABD operon has a complex mosaic structure that has been derived by extensive inter- and intraspecies horizontal DNA transfer and intragenic recombination events.</text>
</comment>
<comment type="similarity">
    <text evidence="8">Belongs to the RTX prokaryotic toxin (TC 1.C.11) family.</text>
</comment>
<organism>
    <name type="scientific">Mannheimia haemolytica</name>
    <name type="common">Pasteurella haemolytica</name>
    <dbReference type="NCBI Taxonomy" id="75985"/>
    <lineage>
        <taxon>Bacteria</taxon>
        <taxon>Pseudomonadati</taxon>
        <taxon>Pseudomonadota</taxon>
        <taxon>Gammaproteobacteria</taxon>
        <taxon>Pasteurellales</taxon>
        <taxon>Pasteurellaceae</taxon>
        <taxon>Mannheimia</taxon>
    </lineage>
</organism>
<sequence length="953" mass="101997">MGTRLTTLSNGLKNTLTATKSGLHKAGQSLTQAGSSLKTGAKKIILYIPQNYQYDTEQGNGLQDLVKAAEELGIEVQREERNNIATAQTSLGTIQTAIGLTERGIVLSAPQIDKLLQKTKAGQALGSAESIVQNANKAKTVLSGIQSILGSVLAGMDLDEALQNNSNQHALAKAGLELTNSLIENIANSVKTLDEFGEQISQFGSKLQNIKGLGTLGDKLKNIGGLDKAGLGLDVISGLLSGATAALVLADKNASTAKKVGAGFELANQVVGNITKAVSSYILAQRVAAGLSSTGPVAALIASTVSLAISPLAFAGIADKFNHAKSLESYAERFKKLGYDGDNLLAEYQRGTGTIDASVTAINTALAAIAGGVSAAAAGSVIASPIALLVSGITGVISTILQYSKQAMFEHVANKIHNKIVEWEKNNHGKNYFENGYDARYLANLQDNMKFLLNLNKELQAERVIAITQQQWDNNIGDLAGISRLGEKVLSGKAYVDAFEEGKHIKADKLVQLDSANGIIDVSNSGKAKTQHILFRTPLLTPGTEHRERVQTGKYEYITKLNINRVDSWKITDGAASSTFDLTNVVQRIGIELDNAGNVTKTKETKIIAKLGEGDDNVFVGSGTTEIDGGEGYDRVHYSRGNYGALTIDATKETEQGSYTVNRFVETGKALHEVTSTHTALVGNREEKIEYRHSNNQHHAGYYTKDTLKAVEEIIGTSHNDIFKGSKFNDAFNGGDGVDTIDGNDGNDRLFGGKGDDILDGGNGDDFIDGGKGNDLLHGGKGDDIFVHRKGDGNDIITDSDGNDKLSFSDSNLKDLTFEKVKHNLVITNSKKEKVTIQNWFREADFAKEVPNYKATKDEKIEEIIGQNGERITSKQVDDLIAKGNGKITQDELSKVVDNYELLKHSKNVTNSLDKLISSVSAFTSSNDSRNVLVAPTSMLDQSLSSLQFARAA</sequence>
<proteinExistence type="evidence at protein level"/>
<protein>
    <recommendedName>
        <fullName>Leukotoxin</fullName>
        <shortName>Lkt</shortName>
    </recommendedName>
</protein>
<feature type="chain" id="PRO_0000196220" description="Leukotoxin">
    <location>
        <begin position="1"/>
        <end position="953"/>
    </location>
</feature>
<feature type="transmembrane region" description="Helical" evidence="1">
    <location>
        <begin position="229"/>
        <end position="249"/>
    </location>
</feature>
<feature type="transmembrane region" description="Helical" evidence="1">
    <location>
        <begin position="297"/>
        <end position="317"/>
    </location>
</feature>
<feature type="transmembrane region" description="Helical" evidence="1">
    <location>
        <begin position="359"/>
        <end position="379"/>
    </location>
</feature>
<feature type="transmembrane region" description="Helical" evidence="1">
    <location>
        <begin position="381"/>
        <end position="401"/>
    </location>
</feature>
<feature type="repeat" description="Hemolysin-type calcium-binding 1">
    <location>
        <begin position="715"/>
        <end position="732"/>
    </location>
</feature>
<feature type="repeat" description="Hemolysin-type calcium-binding 2">
    <location>
        <begin position="733"/>
        <end position="750"/>
    </location>
</feature>
<feature type="repeat" description="Hemolysin-type calcium-binding 3">
    <location>
        <begin position="751"/>
        <end position="768"/>
    </location>
</feature>
<feature type="repeat" description="Hemolysin-type calcium-binding 4">
    <location>
        <begin position="769"/>
        <end position="786"/>
    </location>
</feature>
<feature type="repeat" description="Hemolysin-type calcium-binding 5">
    <location>
        <begin position="789"/>
        <end position="806"/>
    </location>
</feature>
<accession>Q7BHI8</accession>
<dbReference type="EMBL" id="AF314503">
    <property type="protein sequence ID" value="AAG40287.1"/>
    <property type="molecule type" value="Genomic_DNA"/>
</dbReference>
<dbReference type="RefSeq" id="WP_006248023.1">
    <property type="nucleotide sequence ID" value="NZ_VAJK01000035.1"/>
</dbReference>
<dbReference type="SMR" id="Q7BHI8"/>
<dbReference type="IntAct" id="Q7BHI8">
    <property type="interactions" value="2"/>
</dbReference>
<dbReference type="OrthoDB" id="5664974at2"/>
<dbReference type="GO" id="GO:0005576">
    <property type="term" value="C:extracellular region"/>
    <property type="evidence" value="ECO:0007669"/>
    <property type="project" value="UniProtKB-SubCell"/>
</dbReference>
<dbReference type="GO" id="GO:0020002">
    <property type="term" value="C:host cell plasma membrane"/>
    <property type="evidence" value="ECO:0007669"/>
    <property type="project" value="UniProtKB-SubCell"/>
</dbReference>
<dbReference type="GO" id="GO:0016020">
    <property type="term" value="C:membrane"/>
    <property type="evidence" value="ECO:0007669"/>
    <property type="project" value="UniProtKB-KW"/>
</dbReference>
<dbReference type="GO" id="GO:0005509">
    <property type="term" value="F:calcium ion binding"/>
    <property type="evidence" value="ECO:0007669"/>
    <property type="project" value="InterPro"/>
</dbReference>
<dbReference type="GO" id="GO:0015267">
    <property type="term" value="F:channel activity"/>
    <property type="evidence" value="ECO:0007669"/>
    <property type="project" value="InterPro"/>
</dbReference>
<dbReference type="GO" id="GO:0090729">
    <property type="term" value="F:toxin activity"/>
    <property type="evidence" value="ECO:0000314"/>
    <property type="project" value="GO_Central"/>
</dbReference>
<dbReference type="GO" id="GO:1902512">
    <property type="term" value="P:positive regulation of apoptotic DNA fragmentation"/>
    <property type="evidence" value="ECO:0000314"/>
    <property type="project" value="AgBase"/>
</dbReference>
<dbReference type="GO" id="GO:0070230">
    <property type="term" value="P:positive regulation of lymphocyte apoptotic process"/>
    <property type="evidence" value="ECO:0000314"/>
    <property type="project" value="AgBase"/>
</dbReference>
<dbReference type="GO" id="GO:0001897">
    <property type="term" value="P:symbiont-mediated cytolysis of host cell"/>
    <property type="evidence" value="ECO:0000315"/>
    <property type="project" value="GO_Central"/>
</dbReference>
<dbReference type="FunFam" id="2.150.10.10:FF:000002">
    <property type="entry name" value="Leukotoxin"/>
    <property type="match status" value="1"/>
</dbReference>
<dbReference type="Gene3D" id="2.150.10.10">
    <property type="entry name" value="Serralysin-like metalloprotease, C-terminal"/>
    <property type="match status" value="1"/>
</dbReference>
<dbReference type="InterPro" id="IPR018511">
    <property type="entry name" value="Hemolysin-typ_Ca-bd_CS"/>
</dbReference>
<dbReference type="InterPro" id="IPR001343">
    <property type="entry name" value="Hemolysn_Ca-bd"/>
</dbReference>
<dbReference type="InterPro" id="IPR013550">
    <property type="entry name" value="RTX_C"/>
</dbReference>
<dbReference type="InterPro" id="IPR018504">
    <property type="entry name" value="RTX_pore_form"/>
</dbReference>
<dbReference type="InterPro" id="IPR050557">
    <property type="entry name" value="RTX_toxin/Mannuronan_C5-epim"/>
</dbReference>
<dbReference type="InterPro" id="IPR003995">
    <property type="entry name" value="RTX_toxin_determinant-A"/>
</dbReference>
<dbReference type="InterPro" id="IPR011049">
    <property type="entry name" value="Serralysin-like_metalloprot_C"/>
</dbReference>
<dbReference type="NCBIfam" id="NF033943">
    <property type="entry name" value="RTX_toxin"/>
    <property type="match status" value="1"/>
</dbReference>
<dbReference type="PANTHER" id="PTHR38340">
    <property type="entry name" value="S-LAYER PROTEIN"/>
    <property type="match status" value="1"/>
</dbReference>
<dbReference type="PANTHER" id="PTHR38340:SF1">
    <property type="entry name" value="S-LAYER PROTEIN"/>
    <property type="match status" value="1"/>
</dbReference>
<dbReference type="Pfam" id="PF00353">
    <property type="entry name" value="HemolysinCabind"/>
    <property type="match status" value="3"/>
</dbReference>
<dbReference type="Pfam" id="PF02382">
    <property type="entry name" value="RTX"/>
    <property type="match status" value="1"/>
</dbReference>
<dbReference type="Pfam" id="PF08339">
    <property type="entry name" value="RTX_C"/>
    <property type="match status" value="1"/>
</dbReference>
<dbReference type="PRINTS" id="PR00313">
    <property type="entry name" value="CABNDNGRPT"/>
</dbReference>
<dbReference type="PRINTS" id="PR01488">
    <property type="entry name" value="RTXTOXINA"/>
</dbReference>
<dbReference type="SUPFAM" id="SSF51120">
    <property type="entry name" value="beta-Roll"/>
    <property type="match status" value="1"/>
</dbReference>
<dbReference type="PROSITE" id="PS00330">
    <property type="entry name" value="HEMOLYSIN_CALCIUM"/>
    <property type="match status" value="4"/>
</dbReference>
<gene>
    <name type="primary">lktA</name>
</gene>
<reference key="1">
    <citation type="journal article" date="2001" name="J. Bacteriol.">
        <title>Sequence diversity and molecular evolution of the leukotoxin (lktA) gene in bovine and ovine strains of Mannheimia (Pasteurella) haemolytica.</title>
        <authorList>
            <person name="Davies R.L."/>
            <person name="Whittam T.S."/>
            <person name="Selander R.K."/>
        </authorList>
    </citation>
    <scope>NUCLEOTIDE SEQUENCE [GENOMIC DNA]</scope>
    <source>
        <strain>Serotype A1 / PH2</strain>
    </source>
</reference>
<reference key="2">
    <citation type="journal article" date="1989" name="Infect. Immun.">
        <title>Transmembrane pore size and role of cell swelling in cytotoxicity caused by Pasteurella haemolytica leukotoxin.</title>
        <authorList>
            <person name="Clinkenbeard K.D."/>
            <person name="Mosier D.A."/>
            <person name="Confer A.W."/>
        </authorList>
    </citation>
    <scope>FUNCTION</scope>
    <source>
        <strain>Serotype A1</strain>
    </source>
</reference>
<reference key="3">
    <citation type="journal article" date="1998" name="Infect. Immun.">
        <title>Pasteurella haemolytica A1-derived leukotoxin and endotoxin induce intracellular calcium elevation in bovine alveolar macrophages by different signaling pathways.</title>
        <authorList>
            <person name="Hsuan S.L."/>
            <person name="Kannan M.S."/>
            <person name="Jeyaseelan S."/>
            <person name="Prakash Y.S."/>
            <person name="Sieck G.C."/>
            <person name="Maheswaran S.K."/>
        </authorList>
    </citation>
    <scope>FUNCTION</scope>
    <source>
        <strain>Serotype A1 / D153</strain>
    </source>
</reference>
<reference key="4">
    <citation type="journal article" date="2000" name="Infect. Immun.">
        <title>Lymphocyte function-associated antigen 1 is a receptor for Pasteurella haemolytica leukotoxin in bovine leukocytes.</title>
        <authorList>
            <person name="Jeyaseelan S."/>
            <person name="Hsuan S.L."/>
            <person name="Kannan M.S."/>
            <person name="Walcheck B."/>
            <person name="Wang J.F."/>
            <person name="Kehrli M.E."/>
            <person name="Lally E.T."/>
            <person name="Sieck G.C."/>
            <person name="Maheswaran S.K."/>
        </authorList>
    </citation>
    <scope>INTERACTION WITH LFA-1</scope>
    <source>
        <strain>Serotype A1 / D153</strain>
    </source>
</reference>
<reference key="5">
    <citation type="journal article" date="2001" name="Infect. Immun.">
        <title>Mannheimia haemolytica leukotoxin activates a nonreceptor tyrosine kinase signaling cascade in bovine leukocytes, which induces biological effects.</title>
        <authorList>
            <person name="Jeyaseelan S."/>
            <person name="Kannan M.S."/>
            <person name="Briggs R.E."/>
            <person name="Thumbikat P."/>
            <person name="Maheswaran S.K."/>
        </authorList>
    </citation>
    <scope>FUNCTION</scope>
    <source>
        <strain>Serotype A1 / D153</strain>
    </source>
</reference>
<reference key="6">
    <citation type="journal article" date="2002" name="Vet. Microbiol.">
        <title>Leukotoxins of Gram-negative bacteria.</title>
        <authorList>
            <person name="Narayanan S.K."/>
            <person name="Nagaraja T.G."/>
            <person name="Chengappa M.M."/>
            <person name="Stewart G.C."/>
        </authorList>
    </citation>
    <scope>REVIEW</scope>
</reference>
<reference key="7">
    <citation type="journal article" date="2003" name="Microb. Pathog.">
        <title>Biological effects of two genetically defined leukotoxin mutants of Mannheimia haemolytica.</title>
        <authorList>
            <person name="Thumbikat P."/>
            <person name="Briggs R.E."/>
            <person name="Kannan M.S."/>
            <person name="Maheswaran S.K."/>
        </authorList>
    </citation>
    <scope>FUNCTION</scope>
</reference>
<reference key="8">
    <citation type="journal article" date="2005" name="Microb. Pathog.">
        <title>Mechanisms underlying Mannheimia haemolytica leukotoxin-induced oncosis and apoptosis of bovine alveolar macrophages.</title>
        <authorList>
            <person name="Thumbikat P."/>
            <person name="Dileepan T."/>
            <person name="Kannan M.S."/>
            <person name="Maheswaran S.K."/>
        </authorList>
    </citation>
    <scope>FUNCTION</scope>
    <source>
        <strain>Serotype A1 / D153</strain>
    </source>
</reference>
<reference key="9">
    <citation type="journal article" date="2005" name="Microb. Pathog.">
        <title>Recombinant expression of bovine LFA-1 and characterization of its role as a receptor for Mannheimia haemolytica leukotoxin.</title>
        <authorList>
            <person name="Dileepan T."/>
            <person name="Thumbikat P."/>
            <person name="Walcheck B."/>
            <person name="Kannan M.S."/>
            <person name="Maheswaran S.K."/>
        </authorList>
    </citation>
    <scope>FUNCTION</scope>
    <source>
        <strain>Serotype A1 / D153</strain>
    </source>
</reference>